<gene>
    <name evidence="1" type="primary">pstB</name>
    <name type="ordered locus">BH2991</name>
</gene>
<feature type="chain" id="PRO_0000092776" description="Phosphate import ATP-binding protein PstB">
    <location>
        <begin position="1"/>
        <end position="278"/>
    </location>
</feature>
<feature type="domain" description="ABC transporter" evidence="1">
    <location>
        <begin position="32"/>
        <end position="273"/>
    </location>
</feature>
<feature type="binding site" evidence="1">
    <location>
        <begin position="64"/>
        <end position="71"/>
    </location>
    <ligand>
        <name>ATP</name>
        <dbReference type="ChEBI" id="CHEBI:30616"/>
    </ligand>
</feature>
<evidence type="ECO:0000255" key="1">
    <source>
        <dbReference type="HAMAP-Rule" id="MF_01702"/>
    </source>
</evidence>
<accession>Q9K8L5</accession>
<protein>
    <recommendedName>
        <fullName evidence="1">Phosphate import ATP-binding protein PstB</fullName>
        <ecNumber evidence="1">7.3.2.1</ecNumber>
    </recommendedName>
    <alternativeName>
        <fullName evidence="1">ABC phosphate transporter</fullName>
    </alternativeName>
    <alternativeName>
        <fullName evidence="1">Phosphate-transporting ATPase</fullName>
    </alternativeName>
</protein>
<comment type="function">
    <text evidence="1">Part of the ABC transporter complex PstSACB involved in phosphate import. Responsible for energy coupling to the transport system.</text>
</comment>
<comment type="catalytic activity">
    <reaction evidence="1">
        <text>phosphate(out) + ATP + H2O = ADP + 2 phosphate(in) + H(+)</text>
        <dbReference type="Rhea" id="RHEA:24440"/>
        <dbReference type="ChEBI" id="CHEBI:15377"/>
        <dbReference type="ChEBI" id="CHEBI:15378"/>
        <dbReference type="ChEBI" id="CHEBI:30616"/>
        <dbReference type="ChEBI" id="CHEBI:43474"/>
        <dbReference type="ChEBI" id="CHEBI:456216"/>
        <dbReference type="EC" id="7.3.2.1"/>
    </reaction>
</comment>
<comment type="subunit">
    <text evidence="1">The complex is composed of two ATP-binding proteins (PstB), two transmembrane proteins (PstC and PstA) and a solute-binding protein (PstS).</text>
</comment>
<comment type="subcellular location">
    <subcellularLocation>
        <location evidence="1">Cell membrane</location>
        <topology evidence="1">Peripheral membrane protein</topology>
    </subcellularLocation>
</comment>
<comment type="similarity">
    <text evidence="1">Belongs to the ABC transporter superfamily. Phosphate importer (TC 3.A.1.7) family.</text>
</comment>
<proteinExistence type="inferred from homology"/>
<name>PSTB_HALH5</name>
<reference key="1">
    <citation type="journal article" date="2000" name="Nucleic Acids Res.">
        <title>Complete genome sequence of the alkaliphilic bacterium Bacillus halodurans and genomic sequence comparison with Bacillus subtilis.</title>
        <authorList>
            <person name="Takami H."/>
            <person name="Nakasone K."/>
            <person name="Takaki Y."/>
            <person name="Maeno G."/>
            <person name="Sasaki R."/>
            <person name="Masui N."/>
            <person name="Fuji F."/>
            <person name="Hirama C."/>
            <person name="Nakamura Y."/>
            <person name="Ogasawara N."/>
            <person name="Kuhara S."/>
            <person name="Horikoshi K."/>
        </authorList>
    </citation>
    <scope>NUCLEOTIDE SEQUENCE [LARGE SCALE GENOMIC DNA]</scope>
    <source>
        <strain>ATCC BAA-125 / DSM 18197 / FERM 7344 / JCM 9153 / C-125</strain>
    </source>
</reference>
<organism>
    <name type="scientific">Halalkalibacterium halodurans (strain ATCC BAA-125 / DSM 18197 / FERM 7344 / JCM 9153 / C-125)</name>
    <name type="common">Bacillus halodurans</name>
    <dbReference type="NCBI Taxonomy" id="272558"/>
    <lineage>
        <taxon>Bacteria</taxon>
        <taxon>Bacillati</taxon>
        <taxon>Bacillota</taxon>
        <taxon>Bacilli</taxon>
        <taxon>Bacillales</taxon>
        <taxon>Bacillaceae</taxon>
        <taxon>Halalkalibacterium (ex Joshi et al. 2022)</taxon>
    </lineage>
</organism>
<keyword id="KW-0067">ATP-binding</keyword>
<keyword id="KW-1003">Cell membrane</keyword>
<keyword id="KW-0472">Membrane</keyword>
<keyword id="KW-0547">Nucleotide-binding</keyword>
<keyword id="KW-0592">Phosphate transport</keyword>
<keyword id="KW-1185">Reference proteome</keyword>
<keyword id="KW-1278">Translocase</keyword>
<keyword id="KW-0813">Transport</keyword>
<sequence length="278" mass="31536">MALTVKEKKNVEVVVPQPRQKHVIQGEPTVAYETRDLNLWYGKDHALKNINLSIYEKEVTAIIGPSGCGKSTYLKTLNRMVELVPSVRISGNISYRGRNILDKSFQVEELRTRVGMVFQKPNPFPKSIFDNVAYGPRIHGIRNKKILSEIVERSLRGAAIWDEVKDRLHENAYGLSGGQQQRLCIARCLAIEPDVILMDEPTSALDPKSTLKIEELIQELKKEYSIIIVTHNMQQAARISDKTAFFLNGEVVEYDSTDIIFSNPSDKRTEDYITGRFG</sequence>
<dbReference type="EC" id="7.3.2.1" evidence="1"/>
<dbReference type="EMBL" id="BA000004">
    <property type="protein sequence ID" value="BAB06710.1"/>
    <property type="molecule type" value="Genomic_DNA"/>
</dbReference>
<dbReference type="PIR" id="G84023">
    <property type="entry name" value="G84023"/>
</dbReference>
<dbReference type="RefSeq" id="WP_010899135.1">
    <property type="nucleotide sequence ID" value="NC_002570.2"/>
</dbReference>
<dbReference type="SMR" id="Q9K8L5"/>
<dbReference type="STRING" id="272558.gene:10728901"/>
<dbReference type="KEGG" id="bha:BH2991"/>
<dbReference type="eggNOG" id="COG1117">
    <property type="taxonomic scope" value="Bacteria"/>
</dbReference>
<dbReference type="HOGENOM" id="CLU_000604_1_22_9"/>
<dbReference type="OrthoDB" id="9802185at2"/>
<dbReference type="Proteomes" id="UP000001258">
    <property type="component" value="Chromosome"/>
</dbReference>
<dbReference type="GO" id="GO:0005886">
    <property type="term" value="C:plasma membrane"/>
    <property type="evidence" value="ECO:0007669"/>
    <property type="project" value="UniProtKB-SubCell"/>
</dbReference>
<dbReference type="GO" id="GO:0005524">
    <property type="term" value="F:ATP binding"/>
    <property type="evidence" value="ECO:0007669"/>
    <property type="project" value="UniProtKB-KW"/>
</dbReference>
<dbReference type="GO" id="GO:0016887">
    <property type="term" value="F:ATP hydrolysis activity"/>
    <property type="evidence" value="ECO:0007669"/>
    <property type="project" value="InterPro"/>
</dbReference>
<dbReference type="GO" id="GO:0015415">
    <property type="term" value="F:ATPase-coupled phosphate ion transmembrane transporter activity"/>
    <property type="evidence" value="ECO:0007669"/>
    <property type="project" value="UniProtKB-EC"/>
</dbReference>
<dbReference type="GO" id="GO:0035435">
    <property type="term" value="P:phosphate ion transmembrane transport"/>
    <property type="evidence" value="ECO:0007669"/>
    <property type="project" value="InterPro"/>
</dbReference>
<dbReference type="CDD" id="cd03260">
    <property type="entry name" value="ABC_PstB_phosphate_transporter"/>
    <property type="match status" value="1"/>
</dbReference>
<dbReference type="FunFam" id="3.40.50.300:FF:000132">
    <property type="entry name" value="Phosphate import ATP-binding protein PstB"/>
    <property type="match status" value="1"/>
</dbReference>
<dbReference type="Gene3D" id="3.40.50.300">
    <property type="entry name" value="P-loop containing nucleotide triphosphate hydrolases"/>
    <property type="match status" value="1"/>
</dbReference>
<dbReference type="InterPro" id="IPR003593">
    <property type="entry name" value="AAA+_ATPase"/>
</dbReference>
<dbReference type="InterPro" id="IPR003439">
    <property type="entry name" value="ABC_transporter-like_ATP-bd"/>
</dbReference>
<dbReference type="InterPro" id="IPR017871">
    <property type="entry name" value="ABC_transporter-like_CS"/>
</dbReference>
<dbReference type="InterPro" id="IPR027417">
    <property type="entry name" value="P-loop_NTPase"/>
</dbReference>
<dbReference type="InterPro" id="IPR005670">
    <property type="entry name" value="PstB-like"/>
</dbReference>
<dbReference type="NCBIfam" id="TIGR00972">
    <property type="entry name" value="3a0107s01c2"/>
    <property type="match status" value="1"/>
</dbReference>
<dbReference type="PANTHER" id="PTHR43423">
    <property type="entry name" value="ABC TRANSPORTER I FAMILY MEMBER 17"/>
    <property type="match status" value="1"/>
</dbReference>
<dbReference type="PANTHER" id="PTHR43423:SF1">
    <property type="entry name" value="ABC TRANSPORTER I FAMILY MEMBER 17"/>
    <property type="match status" value="1"/>
</dbReference>
<dbReference type="Pfam" id="PF00005">
    <property type="entry name" value="ABC_tran"/>
    <property type="match status" value="1"/>
</dbReference>
<dbReference type="SMART" id="SM00382">
    <property type="entry name" value="AAA"/>
    <property type="match status" value="1"/>
</dbReference>
<dbReference type="SUPFAM" id="SSF52540">
    <property type="entry name" value="P-loop containing nucleoside triphosphate hydrolases"/>
    <property type="match status" value="1"/>
</dbReference>
<dbReference type="PROSITE" id="PS00211">
    <property type="entry name" value="ABC_TRANSPORTER_1"/>
    <property type="match status" value="1"/>
</dbReference>
<dbReference type="PROSITE" id="PS50893">
    <property type="entry name" value="ABC_TRANSPORTER_2"/>
    <property type="match status" value="1"/>
</dbReference>
<dbReference type="PROSITE" id="PS51238">
    <property type="entry name" value="PSTB"/>
    <property type="match status" value="1"/>
</dbReference>